<gene>
    <name type="ordered locus">LS215_1772</name>
</gene>
<feature type="chain" id="PRO_1000202084" description="Putative adenylate kinase">
    <location>
        <begin position="1"/>
        <end position="187"/>
    </location>
</feature>
<feature type="region of interest" description="NMP" evidence="1">
    <location>
        <begin position="30"/>
        <end position="53"/>
    </location>
</feature>
<feature type="region of interest" description="LID" evidence="1">
    <location>
        <begin position="103"/>
        <end position="113"/>
    </location>
</feature>
<feature type="binding site" evidence="1">
    <location>
        <position position="10"/>
    </location>
    <ligand>
        <name>ATP</name>
        <dbReference type="ChEBI" id="CHEBI:30616"/>
    </ligand>
</feature>
<feature type="binding site" evidence="1">
    <location>
        <position position="12"/>
    </location>
    <ligand>
        <name>ATP</name>
        <dbReference type="ChEBI" id="CHEBI:30616"/>
    </ligand>
</feature>
<feature type="binding site" evidence="1">
    <location>
        <position position="13"/>
    </location>
    <ligand>
        <name>ATP</name>
        <dbReference type="ChEBI" id="CHEBI:30616"/>
    </ligand>
</feature>
<feature type="binding site" evidence="1">
    <location>
        <position position="14"/>
    </location>
    <ligand>
        <name>ATP</name>
        <dbReference type="ChEBI" id="CHEBI:30616"/>
    </ligand>
</feature>
<feature type="binding site" evidence="1">
    <location>
        <position position="15"/>
    </location>
    <ligand>
        <name>ATP</name>
        <dbReference type="ChEBI" id="CHEBI:30616"/>
    </ligand>
</feature>
<feature type="binding site" evidence="1">
    <location>
        <position position="104"/>
    </location>
    <ligand>
        <name>ATP</name>
        <dbReference type="ChEBI" id="CHEBI:30616"/>
    </ligand>
</feature>
<proteinExistence type="inferred from homology"/>
<protein>
    <recommendedName>
        <fullName evidence="1">Putative adenylate kinase</fullName>
        <shortName evidence="1">AK</shortName>
        <ecNumber evidence="1">2.7.4.3</ecNumber>
    </recommendedName>
    <alternativeName>
        <fullName evidence="1">ATP-AMP transphosphorylase</fullName>
    </alternativeName>
</protein>
<comment type="function">
    <text evidence="1">Broad-specificity nucleoside monophosphate (NMP) kinase that catalyzes the reversible transfer of the terminal phosphate group between nucleoside triphosphates and monophosphates. Also has ATPase activity. Involved in the late maturation steps of the 30S ribosomal particles, specifically 16S rRNA maturation. While NMP activity is not required for ribosome maturation, ATPase activity is. Associates transiently with small ribosomal subunit protein uS11. ATP hydrolysis breaks the interaction with uS11. May temporarily remove uS11 from the ribosome to enable a conformational change of the ribosomal RNA that is needed for the final maturation step of the small ribosomal subunit.</text>
</comment>
<comment type="catalytic activity">
    <reaction evidence="1">
        <text>AMP + ATP = 2 ADP</text>
        <dbReference type="Rhea" id="RHEA:12973"/>
        <dbReference type="ChEBI" id="CHEBI:30616"/>
        <dbReference type="ChEBI" id="CHEBI:456215"/>
        <dbReference type="ChEBI" id="CHEBI:456216"/>
        <dbReference type="EC" id="2.7.4.3"/>
    </reaction>
</comment>
<comment type="catalytic activity">
    <reaction evidence="1">
        <text>ATP + H2O = ADP + phosphate + H(+)</text>
        <dbReference type="Rhea" id="RHEA:13065"/>
        <dbReference type="ChEBI" id="CHEBI:15377"/>
        <dbReference type="ChEBI" id="CHEBI:15378"/>
        <dbReference type="ChEBI" id="CHEBI:30616"/>
        <dbReference type="ChEBI" id="CHEBI:43474"/>
        <dbReference type="ChEBI" id="CHEBI:456216"/>
    </reaction>
</comment>
<comment type="subunit">
    <text evidence="1">Interacts with uS11. Not a structural component of 40S pre-ribosomes, but transiently interacts with them by binding to uS11.</text>
</comment>
<comment type="similarity">
    <text evidence="1">Belongs to the adenylate kinase family. AK6 subfamily.</text>
</comment>
<accession>C3MQV5</accession>
<keyword id="KW-0067">ATP-binding</keyword>
<keyword id="KW-0418">Kinase</keyword>
<keyword id="KW-0547">Nucleotide-binding</keyword>
<keyword id="KW-0690">Ribosome biogenesis</keyword>
<keyword id="KW-0698">rRNA processing</keyword>
<keyword id="KW-0808">Transferase</keyword>
<organism>
    <name type="scientific">Saccharolobus islandicus (strain L.S.2.15 / Lassen #1)</name>
    <name type="common">Sulfolobus islandicus</name>
    <dbReference type="NCBI Taxonomy" id="429572"/>
    <lineage>
        <taxon>Archaea</taxon>
        <taxon>Thermoproteota</taxon>
        <taxon>Thermoprotei</taxon>
        <taxon>Sulfolobales</taxon>
        <taxon>Sulfolobaceae</taxon>
        <taxon>Saccharolobus</taxon>
    </lineage>
</organism>
<sequence>MIIIVTGTPGVGKTIASKKLSEALNLNYLSLSQFVIENKLYTEYDELRQSYIIDEDKVKEELEKIISTSHLVIETIYPSLVSTADLVVVLRKNPFSLYNELKGRGWADIKVAENVEAEILGVISQEAREAFKDKVCEVDTTEMSTEQILNKILNKQCDGPIEWLVDTKVQRFLEELDKIISSYENDI</sequence>
<name>KAD6_SACI2</name>
<evidence type="ECO:0000255" key="1">
    <source>
        <dbReference type="HAMAP-Rule" id="MF_00039"/>
    </source>
</evidence>
<reference key="1">
    <citation type="journal article" date="2009" name="Proc. Natl. Acad. Sci. U.S.A.">
        <title>Biogeography of the Sulfolobus islandicus pan-genome.</title>
        <authorList>
            <person name="Reno M.L."/>
            <person name="Held N.L."/>
            <person name="Fields C.J."/>
            <person name="Burke P.V."/>
            <person name="Whitaker R.J."/>
        </authorList>
    </citation>
    <scope>NUCLEOTIDE SEQUENCE [LARGE SCALE GENOMIC DNA]</scope>
    <source>
        <strain>L.S.2.15 / Lassen #1</strain>
    </source>
</reference>
<dbReference type="EC" id="2.7.4.3" evidence="1"/>
<dbReference type="EMBL" id="CP001399">
    <property type="protein sequence ID" value="ACP35768.1"/>
    <property type="molecule type" value="Genomic_DNA"/>
</dbReference>
<dbReference type="RefSeq" id="WP_012713886.1">
    <property type="nucleotide sequence ID" value="NC_012589.1"/>
</dbReference>
<dbReference type="SMR" id="C3MQV5"/>
<dbReference type="GeneID" id="7799409"/>
<dbReference type="KEGG" id="sis:LS215_1772"/>
<dbReference type="HOGENOM" id="CLU_079096_3_1_2"/>
<dbReference type="OrthoDB" id="8730at2157"/>
<dbReference type="Proteomes" id="UP000001747">
    <property type="component" value="Chromosome"/>
</dbReference>
<dbReference type="GO" id="GO:0004017">
    <property type="term" value="F:adenylate kinase activity"/>
    <property type="evidence" value="ECO:0007669"/>
    <property type="project" value="UniProtKB-UniRule"/>
</dbReference>
<dbReference type="GO" id="GO:0005524">
    <property type="term" value="F:ATP binding"/>
    <property type="evidence" value="ECO:0007669"/>
    <property type="project" value="UniProtKB-UniRule"/>
</dbReference>
<dbReference type="GO" id="GO:0016887">
    <property type="term" value="F:ATP hydrolysis activity"/>
    <property type="evidence" value="ECO:0007669"/>
    <property type="project" value="InterPro"/>
</dbReference>
<dbReference type="GO" id="GO:0042274">
    <property type="term" value="P:ribosomal small subunit biogenesis"/>
    <property type="evidence" value="ECO:0007669"/>
    <property type="project" value="UniProtKB-UniRule"/>
</dbReference>
<dbReference type="GO" id="GO:0006364">
    <property type="term" value="P:rRNA processing"/>
    <property type="evidence" value="ECO:0007669"/>
    <property type="project" value="UniProtKB-KW"/>
</dbReference>
<dbReference type="Gene3D" id="3.40.50.300">
    <property type="entry name" value="P-loop containing nucleotide triphosphate hydrolases"/>
    <property type="match status" value="1"/>
</dbReference>
<dbReference type="HAMAP" id="MF_00039">
    <property type="entry name" value="Adenylate_kinase_AK6"/>
    <property type="match status" value="1"/>
</dbReference>
<dbReference type="InterPro" id="IPR020618">
    <property type="entry name" value="Adenyl_kinase_AK6"/>
</dbReference>
<dbReference type="InterPro" id="IPR027417">
    <property type="entry name" value="P-loop_NTPase"/>
</dbReference>
<dbReference type="PANTHER" id="PTHR12595:SF0">
    <property type="entry name" value="ADENYLATE KINASE ISOENZYME 6"/>
    <property type="match status" value="1"/>
</dbReference>
<dbReference type="PANTHER" id="PTHR12595">
    <property type="entry name" value="POS9-ACTIVATING FACTOR FAP7-RELATED"/>
    <property type="match status" value="1"/>
</dbReference>
<dbReference type="Pfam" id="PF13238">
    <property type="entry name" value="AAA_18"/>
    <property type="match status" value="1"/>
</dbReference>
<dbReference type="SUPFAM" id="SSF52540">
    <property type="entry name" value="P-loop containing nucleoside triphosphate hydrolases"/>
    <property type="match status" value="1"/>
</dbReference>